<dbReference type="EC" id="2.7.11.1" evidence="1"/>
<dbReference type="EMBL" id="AL513382">
    <property type="protein sequence ID" value="CAD03103.1"/>
    <property type="molecule type" value="Genomic_DNA"/>
</dbReference>
<dbReference type="EMBL" id="AE014613">
    <property type="protein sequence ID" value="AAO71125.1"/>
    <property type="molecule type" value="Genomic_DNA"/>
</dbReference>
<dbReference type="RefSeq" id="NP_458052.1">
    <property type="nucleotide sequence ID" value="NC_003198.1"/>
</dbReference>
<dbReference type="RefSeq" id="WP_000999265.1">
    <property type="nucleotide sequence ID" value="NZ_WSUR01000010.1"/>
</dbReference>
<dbReference type="SMR" id="Q8Z2S0"/>
<dbReference type="STRING" id="220341.gene:17587741"/>
<dbReference type="KEGG" id="stt:t3624"/>
<dbReference type="KEGG" id="sty:STY3884"/>
<dbReference type="PATRIC" id="fig|220341.7.peg.3965"/>
<dbReference type="eggNOG" id="COG2334">
    <property type="taxonomic scope" value="Bacteria"/>
</dbReference>
<dbReference type="HOGENOM" id="CLU_054715_0_0_6"/>
<dbReference type="OMA" id="MHYSAWL"/>
<dbReference type="OrthoDB" id="5392197at2"/>
<dbReference type="Proteomes" id="UP000000541">
    <property type="component" value="Chromosome"/>
</dbReference>
<dbReference type="Proteomes" id="UP000002670">
    <property type="component" value="Chromosome"/>
</dbReference>
<dbReference type="GO" id="GO:0005737">
    <property type="term" value="C:cytoplasm"/>
    <property type="evidence" value="ECO:0007669"/>
    <property type="project" value="UniProtKB-SubCell"/>
</dbReference>
<dbReference type="GO" id="GO:0005524">
    <property type="term" value="F:ATP binding"/>
    <property type="evidence" value="ECO:0007669"/>
    <property type="project" value="UniProtKB-UniRule"/>
</dbReference>
<dbReference type="GO" id="GO:0000287">
    <property type="term" value="F:magnesium ion binding"/>
    <property type="evidence" value="ECO:0007669"/>
    <property type="project" value="UniProtKB-UniRule"/>
</dbReference>
<dbReference type="GO" id="GO:0106310">
    <property type="term" value="F:protein serine kinase activity"/>
    <property type="evidence" value="ECO:0007669"/>
    <property type="project" value="RHEA"/>
</dbReference>
<dbReference type="GO" id="GO:0004674">
    <property type="term" value="F:protein serine/threonine kinase activity"/>
    <property type="evidence" value="ECO:0007669"/>
    <property type="project" value="UniProtKB-UniRule"/>
</dbReference>
<dbReference type="Gene3D" id="1.20.1270.170">
    <property type="match status" value="1"/>
</dbReference>
<dbReference type="Gene3D" id="3.30.200.70">
    <property type="match status" value="1"/>
</dbReference>
<dbReference type="Gene3D" id="1.10.510.10">
    <property type="entry name" value="Transferase(Phosphotransferase) domain 1"/>
    <property type="match status" value="1"/>
</dbReference>
<dbReference type="HAMAP" id="MF_01497">
    <property type="entry name" value="SrkA_kinase"/>
    <property type="match status" value="1"/>
</dbReference>
<dbReference type="InterPro" id="IPR002575">
    <property type="entry name" value="Aminoglycoside_PTrfase"/>
</dbReference>
<dbReference type="InterPro" id="IPR011009">
    <property type="entry name" value="Kinase-like_dom_sf"/>
</dbReference>
<dbReference type="InterPro" id="IPR032882">
    <property type="entry name" value="SrkA/RdoA"/>
</dbReference>
<dbReference type="NCBIfam" id="NF008738">
    <property type="entry name" value="PRK11768.1"/>
    <property type="match status" value="1"/>
</dbReference>
<dbReference type="PANTHER" id="PTHR39573">
    <property type="entry name" value="STRESS RESPONSE KINASE A"/>
    <property type="match status" value="1"/>
</dbReference>
<dbReference type="PANTHER" id="PTHR39573:SF1">
    <property type="entry name" value="STRESS RESPONSE KINASE A"/>
    <property type="match status" value="1"/>
</dbReference>
<dbReference type="Pfam" id="PF01636">
    <property type="entry name" value="APH"/>
    <property type="match status" value="1"/>
</dbReference>
<dbReference type="SUPFAM" id="SSF56112">
    <property type="entry name" value="Protein kinase-like (PK-like)"/>
    <property type="match status" value="1"/>
</dbReference>
<protein>
    <recommendedName>
        <fullName evidence="1">Stress response kinase A</fullName>
        <ecNumber evidence="1">2.7.11.1</ecNumber>
    </recommendedName>
    <alternativeName>
        <fullName evidence="1">Serine/threonine-protein kinase SrkA</fullName>
    </alternativeName>
</protein>
<accession>Q8Z2S0</accession>
<accession>Q7C6K0</accession>
<reference key="1">
    <citation type="journal article" date="2001" name="Nature">
        <title>Complete genome sequence of a multiple drug resistant Salmonella enterica serovar Typhi CT18.</title>
        <authorList>
            <person name="Parkhill J."/>
            <person name="Dougan G."/>
            <person name="James K.D."/>
            <person name="Thomson N.R."/>
            <person name="Pickard D."/>
            <person name="Wain J."/>
            <person name="Churcher C.M."/>
            <person name="Mungall K.L."/>
            <person name="Bentley S.D."/>
            <person name="Holden M.T.G."/>
            <person name="Sebaihia M."/>
            <person name="Baker S."/>
            <person name="Basham D."/>
            <person name="Brooks K."/>
            <person name="Chillingworth T."/>
            <person name="Connerton P."/>
            <person name="Cronin A."/>
            <person name="Davis P."/>
            <person name="Davies R.M."/>
            <person name="Dowd L."/>
            <person name="White N."/>
            <person name="Farrar J."/>
            <person name="Feltwell T."/>
            <person name="Hamlin N."/>
            <person name="Haque A."/>
            <person name="Hien T.T."/>
            <person name="Holroyd S."/>
            <person name="Jagels K."/>
            <person name="Krogh A."/>
            <person name="Larsen T.S."/>
            <person name="Leather S."/>
            <person name="Moule S."/>
            <person name="O'Gaora P."/>
            <person name="Parry C."/>
            <person name="Quail M.A."/>
            <person name="Rutherford K.M."/>
            <person name="Simmonds M."/>
            <person name="Skelton J."/>
            <person name="Stevens K."/>
            <person name="Whitehead S."/>
            <person name="Barrell B.G."/>
        </authorList>
    </citation>
    <scope>NUCLEOTIDE SEQUENCE [LARGE SCALE GENOMIC DNA]</scope>
    <source>
        <strain>CT18</strain>
    </source>
</reference>
<reference key="2">
    <citation type="journal article" date="2003" name="J. Bacteriol.">
        <title>Comparative genomics of Salmonella enterica serovar Typhi strains Ty2 and CT18.</title>
        <authorList>
            <person name="Deng W."/>
            <person name="Liou S.-R."/>
            <person name="Plunkett G. III"/>
            <person name="Mayhew G.F."/>
            <person name="Rose D.J."/>
            <person name="Burland V."/>
            <person name="Kodoyianni V."/>
            <person name="Schwartz D.C."/>
            <person name="Blattner F.R."/>
        </authorList>
    </citation>
    <scope>NUCLEOTIDE SEQUENCE [LARGE SCALE GENOMIC DNA]</scope>
    <source>
        <strain>ATCC 700931 / Ty2</strain>
    </source>
</reference>
<evidence type="ECO:0000255" key="1">
    <source>
        <dbReference type="HAMAP-Rule" id="MF_01497"/>
    </source>
</evidence>
<keyword id="KW-0067">ATP-binding</keyword>
<keyword id="KW-0963">Cytoplasm</keyword>
<keyword id="KW-0418">Kinase</keyword>
<keyword id="KW-0460">Magnesium</keyword>
<keyword id="KW-0479">Metal-binding</keyword>
<keyword id="KW-0547">Nucleotide-binding</keyword>
<keyword id="KW-0597">Phosphoprotein</keyword>
<keyword id="KW-0723">Serine/threonine-protein kinase</keyword>
<keyword id="KW-0346">Stress response</keyword>
<keyword id="KW-0808">Transferase</keyword>
<proteinExistence type="inferred from homology"/>
<sequence>MNDNAFTFQTLHPETIMDALFEQGIRVDSGLTPLNSYENRVYQFQDEDRRRFVVKFYRPERWSVDQIREEHQFALELVKDEVPVAAPLAFNGQTLLAHQGYHYAIFPSVGGRQFEADNIDQMEAVGRYLGRLHQTGRKRPFTFRPDIGLAEYLFEPRQVFEDAALIPSGQKAAFLKATDTLLSAVTECWRTDFATLRLHGDCHAGNILWRDGPLFVDLDDARNGPAIQDLWMLLNGNKAEQRMQLETIIEAYEEVSEFDTAEIGLIEPLRAMRLVYYLAWLIRRWGDPAFPKNFPWLTGEDYWQRQTTTFIEQTKILHEPPLQLTPMY</sequence>
<organism>
    <name type="scientific">Salmonella typhi</name>
    <dbReference type="NCBI Taxonomy" id="90370"/>
    <lineage>
        <taxon>Bacteria</taxon>
        <taxon>Pseudomonadati</taxon>
        <taxon>Pseudomonadota</taxon>
        <taxon>Gammaproteobacteria</taxon>
        <taxon>Enterobacterales</taxon>
        <taxon>Enterobacteriaceae</taxon>
        <taxon>Salmonella</taxon>
    </lineage>
</organism>
<comment type="function">
    <text evidence="1">A protein kinase that phosphorylates Ser and Thr residues. Probably acts to suppress the effects of stress linked to accumulation of reactive oxygen species. Probably involved in the extracytoplasmic stress response.</text>
</comment>
<comment type="catalytic activity">
    <reaction evidence="1">
        <text>L-seryl-[protein] + ATP = O-phospho-L-seryl-[protein] + ADP + H(+)</text>
        <dbReference type="Rhea" id="RHEA:17989"/>
        <dbReference type="Rhea" id="RHEA-COMP:9863"/>
        <dbReference type="Rhea" id="RHEA-COMP:11604"/>
        <dbReference type="ChEBI" id="CHEBI:15378"/>
        <dbReference type="ChEBI" id="CHEBI:29999"/>
        <dbReference type="ChEBI" id="CHEBI:30616"/>
        <dbReference type="ChEBI" id="CHEBI:83421"/>
        <dbReference type="ChEBI" id="CHEBI:456216"/>
        <dbReference type="EC" id="2.7.11.1"/>
    </reaction>
</comment>
<comment type="catalytic activity">
    <reaction evidence="1">
        <text>L-threonyl-[protein] + ATP = O-phospho-L-threonyl-[protein] + ADP + H(+)</text>
        <dbReference type="Rhea" id="RHEA:46608"/>
        <dbReference type="Rhea" id="RHEA-COMP:11060"/>
        <dbReference type="Rhea" id="RHEA-COMP:11605"/>
        <dbReference type="ChEBI" id="CHEBI:15378"/>
        <dbReference type="ChEBI" id="CHEBI:30013"/>
        <dbReference type="ChEBI" id="CHEBI:30616"/>
        <dbReference type="ChEBI" id="CHEBI:61977"/>
        <dbReference type="ChEBI" id="CHEBI:456216"/>
        <dbReference type="EC" id="2.7.11.1"/>
    </reaction>
</comment>
<comment type="cofactor">
    <cofactor evidence="1">
        <name>Mg(2+)</name>
        <dbReference type="ChEBI" id="CHEBI:18420"/>
    </cofactor>
</comment>
<comment type="subunit">
    <text evidence="1">Monomer.</text>
</comment>
<comment type="subcellular location">
    <subcellularLocation>
        <location evidence="1">Cytoplasm</location>
    </subcellularLocation>
</comment>
<comment type="similarity">
    <text evidence="1">Belongs to the SrkA/RdoA protein kinase family.</text>
</comment>
<feature type="chain" id="PRO_0000209579" description="Stress response kinase A">
    <location>
        <begin position="1"/>
        <end position="328"/>
    </location>
</feature>
<feature type="active site" description="Proton acceptor" evidence="1">
    <location>
        <position position="201"/>
    </location>
</feature>
<feature type="active site" evidence="1">
    <location>
        <position position="217"/>
    </location>
</feature>
<feature type="binding site" evidence="1">
    <location>
        <position position="206"/>
    </location>
    <ligand>
        <name>Mg(2+)</name>
        <dbReference type="ChEBI" id="CHEBI:18420"/>
    </ligand>
</feature>
<feature type="binding site" evidence="1">
    <location>
        <position position="217"/>
    </location>
    <ligand>
        <name>Mg(2+)</name>
        <dbReference type="ChEBI" id="CHEBI:18420"/>
    </ligand>
</feature>
<feature type="site" description="ATP" evidence="1">
    <location>
        <position position="36"/>
    </location>
</feature>
<gene>
    <name evidence="1" type="primary">srkA</name>
    <name type="ordered locus">STY3884</name>
    <name type="ordered locus">t3624</name>
</gene>
<name>SRKA_SALTI</name>